<keyword id="KW-0472">Membrane</keyword>
<keyword id="KW-1185">Reference proteome</keyword>
<keyword id="KW-0812">Transmembrane</keyword>
<keyword id="KW-1133">Transmembrane helix</keyword>
<keyword id="KW-0813">Transport</keyword>
<evidence type="ECO:0000255" key="1"/>
<evidence type="ECO:0000303" key="2">
    <source>
    </source>
</evidence>
<evidence type="ECO:0000305" key="3"/>
<evidence type="ECO:0000312" key="4">
    <source>
        <dbReference type="Araport" id="AT1G33090"/>
    </source>
</evidence>
<evidence type="ECO:0000312" key="5">
    <source>
        <dbReference type="EMBL" id="AAF31289.1"/>
    </source>
</evidence>
<evidence type="ECO:0000312" key="6">
    <source>
        <dbReference type="EMBL" id="AC021045"/>
    </source>
</evidence>
<feature type="chain" id="PRO_0000434063" description="Protein DETOXIFICATION 22">
    <location>
        <begin position="1"/>
        <end position="494"/>
    </location>
</feature>
<feature type="transmembrane region" description="Helical" evidence="1">
    <location>
        <begin position="40"/>
        <end position="60"/>
    </location>
</feature>
<feature type="transmembrane region" description="Helical" evidence="1">
    <location>
        <begin position="78"/>
        <end position="98"/>
    </location>
</feature>
<feature type="transmembrane region" description="Helical" evidence="1">
    <location>
        <begin position="123"/>
        <end position="143"/>
    </location>
</feature>
<feature type="transmembrane region" description="Helical" evidence="1">
    <location>
        <begin position="159"/>
        <end position="179"/>
    </location>
</feature>
<feature type="transmembrane region" description="Helical" evidence="1">
    <location>
        <begin position="188"/>
        <end position="208"/>
    </location>
</feature>
<feature type="transmembrane region" description="Helical" evidence="1">
    <location>
        <begin position="217"/>
        <end position="237"/>
    </location>
</feature>
<feature type="transmembrane region" description="Helical" evidence="1">
    <location>
        <begin position="268"/>
        <end position="288"/>
    </location>
</feature>
<feature type="transmembrane region" description="Helical" evidence="1">
    <location>
        <begin position="299"/>
        <end position="319"/>
    </location>
</feature>
<feature type="transmembrane region" description="Helical" evidence="1">
    <location>
        <begin position="340"/>
        <end position="360"/>
    </location>
</feature>
<feature type="transmembrane region" description="Helical" evidence="1">
    <location>
        <begin position="384"/>
        <end position="404"/>
    </location>
</feature>
<feature type="transmembrane region" description="Helical" evidence="1">
    <location>
        <begin position="416"/>
        <end position="436"/>
    </location>
</feature>
<feature type="transmembrane region" description="Helical" evidence="1">
    <location>
        <begin position="441"/>
        <end position="461"/>
    </location>
</feature>
<feature type="sequence conflict" description="In Ref. 3; BAF00892." evidence="3" ref="3">
    <original>I</original>
    <variation>V</variation>
    <location>
        <position position="35"/>
    </location>
</feature>
<name>DTX22_ARATH</name>
<comment type="subcellular location">
    <subcellularLocation>
        <location evidence="1">Membrane</location>
        <topology evidence="1">Multi-pass membrane protein</topology>
    </subcellularLocation>
</comment>
<comment type="similarity">
    <text evidence="3">Belongs to the multi antimicrobial extrusion (MATE) (TC 2.A.66.1) family.</text>
</comment>
<comment type="sequence caution" evidence="3">
    <conflict type="erroneous gene model prediction">
        <sequence resource="EMBL-CDS" id="AAF31289"/>
    </conflict>
</comment>
<dbReference type="EMBL" id="AC006424">
    <property type="protein sequence ID" value="AAF31289.1"/>
    <property type="status" value="ALT_SEQ"/>
    <property type="molecule type" value="Genomic_DNA"/>
</dbReference>
<dbReference type="EMBL" id="AC021045">
    <property type="status" value="NOT_ANNOTATED_CDS"/>
    <property type="molecule type" value="Genomic_DNA"/>
</dbReference>
<dbReference type="EMBL" id="CP002684">
    <property type="protein sequence ID" value="AEE31563.1"/>
    <property type="molecule type" value="Genomic_DNA"/>
</dbReference>
<dbReference type="EMBL" id="AK229005">
    <property type="protein sequence ID" value="BAF00892.1"/>
    <property type="molecule type" value="mRNA"/>
</dbReference>
<dbReference type="RefSeq" id="NP_174585.1">
    <property type="nucleotide sequence ID" value="NM_103043.2"/>
</dbReference>
<dbReference type="SMR" id="F4HPH1"/>
<dbReference type="STRING" id="3702.F4HPH1"/>
<dbReference type="iPTMnet" id="F4HPH1"/>
<dbReference type="PaxDb" id="3702-AT1G33090.1"/>
<dbReference type="ProteomicsDB" id="221882"/>
<dbReference type="EnsemblPlants" id="AT1G33090.1">
    <property type="protein sequence ID" value="AT1G33090.1"/>
    <property type="gene ID" value="AT1G33090"/>
</dbReference>
<dbReference type="GeneID" id="840205"/>
<dbReference type="Gramene" id="AT1G33090.1">
    <property type="protein sequence ID" value="AT1G33090.1"/>
    <property type="gene ID" value="AT1G33090"/>
</dbReference>
<dbReference type="KEGG" id="ath:AT1G33090"/>
<dbReference type="Araport" id="AT1G33090"/>
<dbReference type="TAIR" id="AT1G33090"/>
<dbReference type="eggNOG" id="KOG1347">
    <property type="taxonomic scope" value="Eukaryota"/>
</dbReference>
<dbReference type="HOGENOM" id="CLU_012893_1_4_1"/>
<dbReference type="InParanoid" id="F4HPH1"/>
<dbReference type="OMA" id="CTICIMP"/>
<dbReference type="PRO" id="PR:F4HPH1"/>
<dbReference type="Proteomes" id="UP000006548">
    <property type="component" value="Chromosome 1"/>
</dbReference>
<dbReference type="ExpressionAtlas" id="F4HPH1">
    <property type="expression patterns" value="baseline and differential"/>
</dbReference>
<dbReference type="GO" id="GO:0016020">
    <property type="term" value="C:membrane"/>
    <property type="evidence" value="ECO:0007669"/>
    <property type="project" value="UniProtKB-SubCell"/>
</dbReference>
<dbReference type="GO" id="GO:0015297">
    <property type="term" value="F:antiporter activity"/>
    <property type="evidence" value="ECO:0007669"/>
    <property type="project" value="InterPro"/>
</dbReference>
<dbReference type="GO" id="GO:0042910">
    <property type="term" value="F:xenobiotic transmembrane transporter activity"/>
    <property type="evidence" value="ECO:0007669"/>
    <property type="project" value="InterPro"/>
</dbReference>
<dbReference type="GO" id="GO:1990961">
    <property type="term" value="P:xenobiotic detoxification by transmembrane export across the plasma membrane"/>
    <property type="evidence" value="ECO:0007669"/>
    <property type="project" value="InterPro"/>
</dbReference>
<dbReference type="CDD" id="cd13132">
    <property type="entry name" value="MATE_eukaryotic"/>
    <property type="match status" value="1"/>
</dbReference>
<dbReference type="InterPro" id="IPR045069">
    <property type="entry name" value="MATE_euk"/>
</dbReference>
<dbReference type="InterPro" id="IPR002528">
    <property type="entry name" value="MATE_fam"/>
</dbReference>
<dbReference type="NCBIfam" id="TIGR00797">
    <property type="entry name" value="matE"/>
    <property type="match status" value="1"/>
</dbReference>
<dbReference type="PANTHER" id="PTHR11206">
    <property type="entry name" value="MULTIDRUG RESISTANCE PROTEIN"/>
    <property type="match status" value="1"/>
</dbReference>
<dbReference type="Pfam" id="PF01554">
    <property type="entry name" value="MatE"/>
    <property type="match status" value="2"/>
</dbReference>
<proteinExistence type="evidence at transcript level"/>
<organism>
    <name type="scientific">Arabidopsis thaliana</name>
    <name type="common">Mouse-ear cress</name>
    <dbReference type="NCBI Taxonomy" id="3702"/>
    <lineage>
        <taxon>Eukaryota</taxon>
        <taxon>Viridiplantae</taxon>
        <taxon>Streptophyta</taxon>
        <taxon>Embryophyta</taxon>
        <taxon>Tracheophyta</taxon>
        <taxon>Spermatophyta</taxon>
        <taxon>Magnoliopsida</taxon>
        <taxon>eudicotyledons</taxon>
        <taxon>Gunneridae</taxon>
        <taxon>Pentapetalae</taxon>
        <taxon>rosids</taxon>
        <taxon>malvids</taxon>
        <taxon>Brassicales</taxon>
        <taxon>Brassicaceae</taxon>
        <taxon>Camelineae</taxon>
        <taxon>Arabidopsis</taxon>
    </lineage>
</organism>
<accession>F4HPH1</accession>
<accession>Q0WPQ7</accession>
<accession>Q9MAN5</accession>
<reference key="1">
    <citation type="journal article" date="2000" name="Nature">
        <title>Sequence and analysis of chromosome 1 of the plant Arabidopsis thaliana.</title>
        <authorList>
            <person name="Theologis A."/>
            <person name="Ecker J.R."/>
            <person name="Palm C.J."/>
            <person name="Federspiel N.A."/>
            <person name="Kaul S."/>
            <person name="White O."/>
            <person name="Alonso J."/>
            <person name="Altafi H."/>
            <person name="Araujo R."/>
            <person name="Bowman C.L."/>
            <person name="Brooks S.Y."/>
            <person name="Buehler E."/>
            <person name="Chan A."/>
            <person name="Chao Q."/>
            <person name="Chen H."/>
            <person name="Cheuk R.F."/>
            <person name="Chin C.W."/>
            <person name="Chung M.K."/>
            <person name="Conn L."/>
            <person name="Conway A.B."/>
            <person name="Conway A.R."/>
            <person name="Creasy T.H."/>
            <person name="Dewar K."/>
            <person name="Dunn P."/>
            <person name="Etgu P."/>
            <person name="Feldblyum T.V."/>
            <person name="Feng J.-D."/>
            <person name="Fong B."/>
            <person name="Fujii C.Y."/>
            <person name="Gill J.E."/>
            <person name="Goldsmith A.D."/>
            <person name="Haas B."/>
            <person name="Hansen N.F."/>
            <person name="Hughes B."/>
            <person name="Huizar L."/>
            <person name="Hunter J.L."/>
            <person name="Jenkins J."/>
            <person name="Johnson-Hopson C."/>
            <person name="Khan S."/>
            <person name="Khaykin E."/>
            <person name="Kim C.J."/>
            <person name="Koo H.L."/>
            <person name="Kremenetskaia I."/>
            <person name="Kurtz D.B."/>
            <person name="Kwan A."/>
            <person name="Lam B."/>
            <person name="Langin-Hooper S."/>
            <person name="Lee A."/>
            <person name="Lee J.M."/>
            <person name="Lenz C.A."/>
            <person name="Li J.H."/>
            <person name="Li Y.-P."/>
            <person name="Lin X."/>
            <person name="Liu S.X."/>
            <person name="Liu Z.A."/>
            <person name="Luros J.S."/>
            <person name="Maiti R."/>
            <person name="Marziali A."/>
            <person name="Militscher J."/>
            <person name="Miranda M."/>
            <person name="Nguyen M."/>
            <person name="Nierman W.C."/>
            <person name="Osborne B.I."/>
            <person name="Pai G."/>
            <person name="Peterson J."/>
            <person name="Pham P.K."/>
            <person name="Rizzo M."/>
            <person name="Rooney T."/>
            <person name="Rowley D."/>
            <person name="Sakano H."/>
            <person name="Salzberg S.L."/>
            <person name="Schwartz J.R."/>
            <person name="Shinn P."/>
            <person name="Southwick A.M."/>
            <person name="Sun H."/>
            <person name="Tallon L.J."/>
            <person name="Tambunga G."/>
            <person name="Toriumi M.J."/>
            <person name="Town C.D."/>
            <person name="Utterback T."/>
            <person name="Van Aken S."/>
            <person name="Vaysberg M."/>
            <person name="Vysotskaia V.S."/>
            <person name="Walker M."/>
            <person name="Wu D."/>
            <person name="Yu G."/>
            <person name="Fraser C.M."/>
            <person name="Venter J.C."/>
            <person name="Davis R.W."/>
        </authorList>
    </citation>
    <scope>NUCLEOTIDE SEQUENCE [LARGE SCALE GENOMIC DNA]</scope>
    <source>
        <strain>cv. Columbia</strain>
    </source>
</reference>
<reference key="2">
    <citation type="journal article" date="2017" name="Plant J.">
        <title>Araport11: a complete reannotation of the Arabidopsis thaliana reference genome.</title>
        <authorList>
            <person name="Cheng C.Y."/>
            <person name="Krishnakumar V."/>
            <person name="Chan A.P."/>
            <person name="Thibaud-Nissen F."/>
            <person name="Schobel S."/>
            <person name="Town C.D."/>
        </authorList>
    </citation>
    <scope>GENOME REANNOTATION</scope>
    <source>
        <strain>cv. Columbia</strain>
    </source>
</reference>
<reference key="3">
    <citation type="submission" date="2006-07" db="EMBL/GenBank/DDBJ databases">
        <title>Large-scale analysis of RIKEN Arabidopsis full-length (RAFL) cDNAs.</title>
        <authorList>
            <person name="Totoki Y."/>
            <person name="Seki M."/>
            <person name="Ishida J."/>
            <person name="Nakajima M."/>
            <person name="Enju A."/>
            <person name="Kamiya A."/>
            <person name="Narusaka M."/>
            <person name="Shin-i T."/>
            <person name="Nakagawa M."/>
            <person name="Sakamoto N."/>
            <person name="Oishi K."/>
            <person name="Kohara Y."/>
            <person name="Kobayashi M."/>
            <person name="Toyoda A."/>
            <person name="Sakaki Y."/>
            <person name="Sakurai T."/>
            <person name="Iida K."/>
            <person name="Akiyama K."/>
            <person name="Satou M."/>
            <person name="Toyoda T."/>
            <person name="Konagaya A."/>
            <person name="Carninci P."/>
            <person name="Kawai J."/>
            <person name="Hayashizaki Y."/>
            <person name="Shinozaki K."/>
        </authorList>
    </citation>
    <scope>NUCLEOTIDE SEQUENCE [LARGE SCALE MRNA]</scope>
    <source>
        <strain>cv. Columbia</strain>
    </source>
</reference>
<reference key="4">
    <citation type="journal article" date="2002" name="J. Biol. Chem.">
        <title>Functional cloning and characterization of a plant efflux carrier for multidrug and heavy metal detoxification.</title>
        <authorList>
            <person name="Li L."/>
            <person name="He Z."/>
            <person name="Pandey G.K."/>
            <person name="Tsuchiya T."/>
            <person name="Luan S."/>
        </authorList>
    </citation>
    <scope>GENE FAMILY</scope>
    <scope>NOMENCLATURE</scope>
</reference>
<reference key="5">
    <citation type="journal article" date="2003" name="Eur. J. Biochem.">
        <title>The multidrug/oligosaccharidyl-lipid/polysaccharide (MOP) exporter superfamily.</title>
        <authorList>
            <person name="Hvorup R.N."/>
            <person name="Winnen B."/>
            <person name="Chang A.B."/>
            <person name="Jiang Y."/>
            <person name="Zhou X.F."/>
            <person name="Saier M.H. Jr."/>
        </authorList>
    </citation>
    <scope>GENE FAMILY</scope>
</reference>
<gene>
    <name evidence="2" type="primary">DTX22</name>
    <name evidence="4" type="ordered locus">At1g33090</name>
    <name evidence="5" type="ORF">F9L11.23</name>
    <name evidence="6" type="ORF">T9L6.17</name>
</gene>
<protein>
    <recommendedName>
        <fullName evidence="2">Protein DETOXIFICATION 22</fullName>
        <shortName evidence="2">AtDTX22</shortName>
    </recommendedName>
    <alternativeName>
        <fullName evidence="3">Multidrug and toxic compound extrusion protein 22</fullName>
        <shortName evidence="3">MATE protein 22</shortName>
    </alternativeName>
</protein>
<sequence>MAGEGGELTAALLKKTTENGGEENDELGLKEKVWIESKKLWVVAAPSIFTKFSTYGVSLVTQGFVGHIGPTELAAYSITFTVLLRFSNGILLGMASALGTLCGQAYGAKQYHMLGIHLQRSWIVLTGCTICIMPIFIFSGPILLALGQEDHIVRVARVIALWLIAINFTFVPAFTCQIFLQSQSKNKIIAYVSAVTLGLHVFFSWLLVVHFNFGITGAMTSTLVAFWMPNIVQLLYVTSGGCKDTWRGFTMLAFKDLWPVFKLSLSSGGMVCLELWYNSILVLLTGNLKNAEVAIDALAICINVNALQMMIALGFLAAVSVRVSNELGRGNPEGAKFATIVAVFTSLSIGLVLFFVFLFLRGRISYIFTTSEAVAAEVADLSPLLAFSILLNSVQPVLSGVAVGAGWQGYVAYINLACYYLLGIPVGLVLGYVVGLQVKGVWIGMLFGIFVQTCVLTIMTLRTDWDQQVSTSLKNINRWVVPESRDANQISSEE</sequence>